<name>CH10_CLOPE</name>
<accession>P26822</accession>
<organism>
    <name type="scientific">Clostridium perfringens (strain 13 / Type A)</name>
    <dbReference type="NCBI Taxonomy" id="195102"/>
    <lineage>
        <taxon>Bacteria</taxon>
        <taxon>Bacillati</taxon>
        <taxon>Bacillota</taxon>
        <taxon>Clostridia</taxon>
        <taxon>Eubacteriales</taxon>
        <taxon>Clostridiaceae</taxon>
        <taxon>Clostridium</taxon>
    </lineage>
</organism>
<gene>
    <name evidence="1" type="primary">groES</name>
    <name evidence="1" type="synonym">groS</name>
    <name type="ordered locus">CPE2290</name>
</gene>
<comment type="function">
    <text evidence="1">Together with the chaperonin GroEL, plays an essential role in assisting protein folding. The GroEL-GroES system forms a nano-cage that allows encapsulation of the non-native substrate proteins and provides a physical environment optimized to promote and accelerate protein folding. GroES binds to the apical surface of the GroEL ring, thereby capping the opening of the GroEL channel.</text>
</comment>
<comment type="subunit">
    <text evidence="1">Heptamer of 7 subunits arranged in a ring. Interacts with the chaperonin GroEL.</text>
</comment>
<comment type="subcellular location">
    <subcellularLocation>
        <location evidence="1">Cytoplasm</location>
    </subcellularLocation>
</comment>
<comment type="similarity">
    <text evidence="1 2">Belongs to the GroES chaperonin family.</text>
</comment>
<feature type="chain" id="PRO_0000174738" description="Co-chaperonin GroES">
    <location>
        <begin position="1"/>
        <end position="94"/>
    </location>
</feature>
<evidence type="ECO:0000255" key="1">
    <source>
        <dbReference type="HAMAP-Rule" id="MF_00580"/>
    </source>
</evidence>
<evidence type="ECO:0000305" key="2"/>
<protein>
    <recommendedName>
        <fullName evidence="1">Co-chaperonin GroES</fullName>
    </recommendedName>
    <alternativeName>
        <fullName evidence="1">10 kDa chaperonin</fullName>
    </alternativeName>
    <alternativeName>
        <fullName evidence="1">Chaperonin-10</fullName>
        <shortName evidence="1">Cpn10</shortName>
    </alternativeName>
</protein>
<sequence length="94" mass="10308">MSIKPLGDRVVIKRLEAEETTKSGIIVTGTAKERPQEAEVVAVGPGAIVDGKRTEMEVKIGDKVLYSKYAGTEVKFEGEEYTILRQDDILAIVE</sequence>
<keyword id="KW-0143">Chaperone</keyword>
<keyword id="KW-0963">Cytoplasm</keyword>
<keyword id="KW-1185">Reference proteome</keyword>
<proteinExistence type="inferred from homology"/>
<reference key="1">
    <citation type="journal article" date="1992" name="Biochim. Biophys. Acta">
        <title>Cloning of HSP60 (GroEL) operon from Clostridium perfringens using a polymerase chain reaction based approach.</title>
        <authorList>
            <person name="Rusanganwa E."/>
            <person name="Singh B."/>
            <person name="Gupta R.S."/>
        </authorList>
    </citation>
    <scope>NUCLEOTIDE SEQUENCE [GENOMIC DNA]</scope>
</reference>
<reference key="2">
    <citation type="journal article" date="2002" name="Proc. Natl. Acad. Sci. U.S.A.">
        <title>Complete genome sequence of Clostridium perfringens, an anaerobic flesh-eater.</title>
        <authorList>
            <person name="Shimizu T."/>
            <person name="Ohtani K."/>
            <person name="Hirakawa H."/>
            <person name="Ohshima K."/>
            <person name="Yamashita A."/>
            <person name="Shiba T."/>
            <person name="Ogasawara N."/>
            <person name="Hattori M."/>
            <person name="Kuhara S."/>
            <person name="Hayashi H."/>
        </authorList>
    </citation>
    <scope>NUCLEOTIDE SEQUENCE [LARGE SCALE GENOMIC DNA]</scope>
    <source>
        <strain>13 / Type A</strain>
    </source>
</reference>
<dbReference type="EMBL" id="X62914">
    <property type="protein sequence ID" value="CAA44696.1"/>
    <property type="molecule type" value="Genomic_DNA"/>
</dbReference>
<dbReference type="EMBL" id="BA000016">
    <property type="protein sequence ID" value="BAB81996.1"/>
    <property type="molecule type" value="Genomic_DNA"/>
</dbReference>
<dbReference type="PIR" id="S22343">
    <property type="entry name" value="S22343"/>
</dbReference>
<dbReference type="RefSeq" id="WP_003454296.1">
    <property type="nucleotide sequence ID" value="NC_003366.1"/>
</dbReference>
<dbReference type="SMR" id="P26822"/>
<dbReference type="STRING" id="195102.gene:10491598"/>
<dbReference type="GeneID" id="93001147"/>
<dbReference type="KEGG" id="cpe:CPE2290"/>
<dbReference type="HOGENOM" id="CLU_132825_2_0_9"/>
<dbReference type="Proteomes" id="UP000000818">
    <property type="component" value="Chromosome"/>
</dbReference>
<dbReference type="GO" id="GO:0005737">
    <property type="term" value="C:cytoplasm"/>
    <property type="evidence" value="ECO:0007669"/>
    <property type="project" value="UniProtKB-SubCell"/>
</dbReference>
<dbReference type="GO" id="GO:0005524">
    <property type="term" value="F:ATP binding"/>
    <property type="evidence" value="ECO:0007669"/>
    <property type="project" value="InterPro"/>
</dbReference>
<dbReference type="GO" id="GO:0046872">
    <property type="term" value="F:metal ion binding"/>
    <property type="evidence" value="ECO:0007669"/>
    <property type="project" value="TreeGrafter"/>
</dbReference>
<dbReference type="GO" id="GO:0044183">
    <property type="term" value="F:protein folding chaperone"/>
    <property type="evidence" value="ECO:0007669"/>
    <property type="project" value="InterPro"/>
</dbReference>
<dbReference type="GO" id="GO:0051087">
    <property type="term" value="F:protein-folding chaperone binding"/>
    <property type="evidence" value="ECO:0007669"/>
    <property type="project" value="TreeGrafter"/>
</dbReference>
<dbReference type="GO" id="GO:0051082">
    <property type="term" value="F:unfolded protein binding"/>
    <property type="evidence" value="ECO:0007669"/>
    <property type="project" value="TreeGrafter"/>
</dbReference>
<dbReference type="GO" id="GO:0051085">
    <property type="term" value="P:chaperone cofactor-dependent protein refolding"/>
    <property type="evidence" value="ECO:0007669"/>
    <property type="project" value="TreeGrafter"/>
</dbReference>
<dbReference type="CDD" id="cd00320">
    <property type="entry name" value="cpn10"/>
    <property type="match status" value="1"/>
</dbReference>
<dbReference type="FunFam" id="2.30.33.40:FF:000001">
    <property type="entry name" value="10 kDa chaperonin"/>
    <property type="match status" value="1"/>
</dbReference>
<dbReference type="Gene3D" id="2.30.33.40">
    <property type="entry name" value="GroES chaperonin"/>
    <property type="match status" value="1"/>
</dbReference>
<dbReference type="HAMAP" id="MF_00580">
    <property type="entry name" value="CH10"/>
    <property type="match status" value="1"/>
</dbReference>
<dbReference type="InterPro" id="IPR020818">
    <property type="entry name" value="Chaperonin_GroES"/>
</dbReference>
<dbReference type="InterPro" id="IPR037124">
    <property type="entry name" value="Chaperonin_GroES_sf"/>
</dbReference>
<dbReference type="InterPro" id="IPR018369">
    <property type="entry name" value="Chaprnonin_Cpn10_CS"/>
</dbReference>
<dbReference type="InterPro" id="IPR011032">
    <property type="entry name" value="GroES-like_sf"/>
</dbReference>
<dbReference type="NCBIfam" id="NF001530">
    <property type="entry name" value="PRK00364.1-6"/>
    <property type="match status" value="1"/>
</dbReference>
<dbReference type="NCBIfam" id="NF001531">
    <property type="entry name" value="PRK00364.2-2"/>
    <property type="match status" value="1"/>
</dbReference>
<dbReference type="NCBIfam" id="NF001533">
    <property type="entry name" value="PRK00364.2-4"/>
    <property type="match status" value="1"/>
</dbReference>
<dbReference type="NCBIfam" id="NF001534">
    <property type="entry name" value="PRK00364.2-5"/>
    <property type="match status" value="1"/>
</dbReference>
<dbReference type="PANTHER" id="PTHR10772">
    <property type="entry name" value="10 KDA HEAT SHOCK PROTEIN"/>
    <property type="match status" value="1"/>
</dbReference>
<dbReference type="PANTHER" id="PTHR10772:SF58">
    <property type="entry name" value="CO-CHAPERONIN GROES"/>
    <property type="match status" value="1"/>
</dbReference>
<dbReference type="Pfam" id="PF00166">
    <property type="entry name" value="Cpn10"/>
    <property type="match status" value="1"/>
</dbReference>
<dbReference type="PRINTS" id="PR00297">
    <property type="entry name" value="CHAPERONIN10"/>
</dbReference>
<dbReference type="SMART" id="SM00883">
    <property type="entry name" value="Cpn10"/>
    <property type="match status" value="1"/>
</dbReference>
<dbReference type="SUPFAM" id="SSF50129">
    <property type="entry name" value="GroES-like"/>
    <property type="match status" value="1"/>
</dbReference>
<dbReference type="PROSITE" id="PS00681">
    <property type="entry name" value="CHAPERONINS_CPN10"/>
    <property type="match status" value="1"/>
</dbReference>